<reference key="1">
    <citation type="journal article" date="2011" name="Stand. Genomic Sci.">
        <title>Complete genome sequence of Rhodospirillum rubrum type strain (S1).</title>
        <authorList>
            <person name="Munk A.C."/>
            <person name="Copeland A."/>
            <person name="Lucas S."/>
            <person name="Lapidus A."/>
            <person name="Del Rio T.G."/>
            <person name="Barry K."/>
            <person name="Detter J.C."/>
            <person name="Hammon N."/>
            <person name="Israni S."/>
            <person name="Pitluck S."/>
            <person name="Brettin T."/>
            <person name="Bruce D."/>
            <person name="Han C."/>
            <person name="Tapia R."/>
            <person name="Gilna P."/>
            <person name="Schmutz J."/>
            <person name="Larimer F."/>
            <person name="Land M."/>
            <person name="Kyrpides N.C."/>
            <person name="Mavromatis K."/>
            <person name="Richardson P."/>
            <person name="Rohde M."/>
            <person name="Goeker M."/>
            <person name="Klenk H.P."/>
            <person name="Zhang Y."/>
            <person name="Roberts G.P."/>
            <person name="Reslewic S."/>
            <person name="Schwartz D.C."/>
        </authorList>
    </citation>
    <scope>NUCLEOTIDE SEQUENCE [LARGE SCALE GENOMIC DNA]</scope>
    <source>
        <strain>ATCC 11170 / ATH 1.1.1 / DSM 467 / LMG 4362 / NCIMB 8255 / S1</strain>
    </source>
</reference>
<evidence type="ECO:0000255" key="1">
    <source>
        <dbReference type="HAMAP-Rule" id="MF_00201"/>
    </source>
</evidence>
<feature type="chain" id="PRO_0000264840" description="DNA repair protein RecO">
    <location>
        <begin position="1"/>
        <end position="252"/>
    </location>
</feature>
<name>RECO_RHORT</name>
<comment type="function">
    <text evidence="1">Involved in DNA repair and RecF pathway recombination.</text>
</comment>
<comment type="similarity">
    <text evidence="1">Belongs to the RecO family.</text>
</comment>
<sequence>MIEWSDRGIVLAARPHGEDGVIVSLLSAGHGRHSGIVRGGRGKRLRAALQPGSLVQATWKARLEDHLGSLVVELLAGVAGGLLDDRDRLAALAAACALAETVLPERAPQADVYDATLALLDALAEGGEGTPLVWAGAFVRWEIGLLAALGFGLDLSCCAVSGECGDLAYVSPRSGRAVGREAGAPWQARLLALPAFLLSPAEVPANAQAVGDGLRLSGYFLEGHVLAPQGRGLPASRQRFVERLRRWSAADR</sequence>
<gene>
    <name evidence="1" type="primary">recO</name>
    <name type="ordered locus">Rru_A1849</name>
</gene>
<accession>Q2RT96</accession>
<dbReference type="EMBL" id="CP000230">
    <property type="protein sequence ID" value="ABC22649.1"/>
    <property type="molecule type" value="Genomic_DNA"/>
</dbReference>
<dbReference type="RefSeq" id="WP_011389602.1">
    <property type="nucleotide sequence ID" value="NC_007643.1"/>
</dbReference>
<dbReference type="RefSeq" id="YP_426936.1">
    <property type="nucleotide sequence ID" value="NC_007643.1"/>
</dbReference>
<dbReference type="SMR" id="Q2RT96"/>
<dbReference type="STRING" id="269796.Rru_A1849"/>
<dbReference type="EnsemblBacteria" id="ABC22649">
    <property type="protein sequence ID" value="ABC22649"/>
    <property type="gene ID" value="Rru_A1849"/>
</dbReference>
<dbReference type="KEGG" id="rru:Rru_A1849"/>
<dbReference type="PATRIC" id="fig|269796.9.peg.1928"/>
<dbReference type="eggNOG" id="COG1381">
    <property type="taxonomic scope" value="Bacteria"/>
</dbReference>
<dbReference type="HOGENOM" id="CLU_086029_0_0_5"/>
<dbReference type="PhylomeDB" id="Q2RT96"/>
<dbReference type="Proteomes" id="UP000001929">
    <property type="component" value="Chromosome"/>
</dbReference>
<dbReference type="GO" id="GO:0043590">
    <property type="term" value="C:bacterial nucleoid"/>
    <property type="evidence" value="ECO:0007669"/>
    <property type="project" value="TreeGrafter"/>
</dbReference>
<dbReference type="GO" id="GO:0006310">
    <property type="term" value="P:DNA recombination"/>
    <property type="evidence" value="ECO:0007669"/>
    <property type="project" value="UniProtKB-UniRule"/>
</dbReference>
<dbReference type="GO" id="GO:0006302">
    <property type="term" value="P:double-strand break repair"/>
    <property type="evidence" value="ECO:0007669"/>
    <property type="project" value="TreeGrafter"/>
</dbReference>
<dbReference type="Gene3D" id="2.40.50.140">
    <property type="entry name" value="Nucleic acid-binding proteins"/>
    <property type="match status" value="1"/>
</dbReference>
<dbReference type="Gene3D" id="1.20.1440.120">
    <property type="entry name" value="Recombination protein O, C-terminal domain"/>
    <property type="match status" value="1"/>
</dbReference>
<dbReference type="HAMAP" id="MF_00201">
    <property type="entry name" value="RecO"/>
    <property type="match status" value="1"/>
</dbReference>
<dbReference type="InterPro" id="IPR037278">
    <property type="entry name" value="ARFGAP/RecO"/>
</dbReference>
<dbReference type="InterPro" id="IPR022572">
    <property type="entry name" value="DNA_rep/recomb_RecO_N"/>
</dbReference>
<dbReference type="InterPro" id="IPR012340">
    <property type="entry name" value="NA-bd_OB-fold"/>
</dbReference>
<dbReference type="InterPro" id="IPR003717">
    <property type="entry name" value="RecO"/>
</dbReference>
<dbReference type="InterPro" id="IPR042242">
    <property type="entry name" value="RecO_C"/>
</dbReference>
<dbReference type="NCBIfam" id="TIGR00613">
    <property type="entry name" value="reco"/>
    <property type="match status" value="1"/>
</dbReference>
<dbReference type="PANTHER" id="PTHR33991">
    <property type="entry name" value="DNA REPAIR PROTEIN RECO"/>
    <property type="match status" value="1"/>
</dbReference>
<dbReference type="PANTHER" id="PTHR33991:SF1">
    <property type="entry name" value="DNA REPAIR PROTEIN RECO"/>
    <property type="match status" value="1"/>
</dbReference>
<dbReference type="Pfam" id="PF02565">
    <property type="entry name" value="RecO_C"/>
    <property type="match status" value="1"/>
</dbReference>
<dbReference type="Pfam" id="PF11967">
    <property type="entry name" value="RecO_N"/>
    <property type="match status" value="1"/>
</dbReference>
<dbReference type="SUPFAM" id="SSF57863">
    <property type="entry name" value="ArfGap/RecO-like zinc finger"/>
    <property type="match status" value="1"/>
</dbReference>
<dbReference type="SUPFAM" id="SSF50249">
    <property type="entry name" value="Nucleic acid-binding proteins"/>
    <property type="match status" value="1"/>
</dbReference>
<keyword id="KW-0227">DNA damage</keyword>
<keyword id="KW-0233">DNA recombination</keyword>
<keyword id="KW-0234">DNA repair</keyword>
<keyword id="KW-1185">Reference proteome</keyword>
<organism>
    <name type="scientific">Rhodospirillum rubrum (strain ATCC 11170 / ATH 1.1.1 / DSM 467 / LMG 4362 / NCIMB 8255 / S1)</name>
    <dbReference type="NCBI Taxonomy" id="269796"/>
    <lineage>
        <taxon>Bacteria</taxon>
        <taxon>Pseudomonadati</taxon>
        <taxon>Pseudomonadota</taxon>
        <taxon>Alphaproteobacteria</taxon>
        <taxon>Rhodospirillales</taxon>
        <taxon>Rhodospirillaceae</taxon>
        <taxon>Rhodospirillum</taxon>
    </lineage>
</organism>
<proteinExistence type="inferred from homology"/>
<protein>
    <recommendedName>
        <fullName evidence="1">DNA repair protein RecO</fullName>
    </recommendedName>
    <alternativeName>
        <fullName evidence="1">Recombination protein O</fullName>
    </alternativeName>
</protein>